<proteinExistence type="inferred from homology"/>
<protein>
    <recommendedName>
        <fullName evidence="1">UPF0270 protein YheU</fullName>
    </recommendedName>
</protein>
<feature type="chain" id="PRO_1000045160" description="UPF0270 protein YheU">
    <location>
        <begin position="1"/>
        <end position="72"/>
    </location>
</feature>
<name>YHEU_ECOUT</name>
<dbReference type="EMBL" id="CP000243">
    <property type="protein sequence ID" value="ABE09286.1"/>
    <property type="molecule type" value="Genomic_DNA"/>
</dbReference>
<dbReference type="RefSeq" id="WP_000907086.1">
    <property type="nucleotide sequence ID" value="NZ_CP064825.1"/>
</dbReference>
<dbReference type="SMR" id="Q1R5S8"/>
<dbReference type="KEGG" id="eci:UTI89_C3857"/>
<dbReference type="HOGENOM" id="CLU_186759_1_0_6"/>
<dbReference type="Proteomes" id="UP000001952">
    <property type="component" value="Chromosome"/>
</dbReference>
<dbReference type="Gene3D" id="1.10.10.610">
    <property type="entry name" value="YehU-like"/>
    <property type="match status" value="1"/>
</dbReference>
<dbReference type="HAMAP" id="MF_00690">
    <property type="entry name" value="UPF0270"/>
    <property type="match status" value="1"/>
</dbReference>
<dbReference type="InterPro" id="IPR010648">
    <property type="entry name" value="UPF0270"/>
</dbReference>
<dbReference type="InterPro" id="IPR036685">
    <property type="entry name" value="YehU-like_sf"/>
</dbReference>
<dbReference type="NCBIfam" id="NF003438">
    <property type="entry name" value="PRK04966.1"/>
    <property type="match status" value="1"/>
</dbReference>
<dbReference type="Pfam" id="PF06794">
    <property type="entry name" value="UPF0270"/>
    <property type="match status" value="1"/>
</dbReference>
<dbReference type="PIRSF" id="PIRSF006169">
    <property type="entry name" value="UCP006169"/>
    <property type="match status" value="1"/>
</dbReference>
<dbReference type="SUPFAM" id="SSF118001">
    <property type="entry name" value="YehU-like"/>
    <property type="match status" value="1"/>
</dbReference>
<sequence length="72" mass="8486">MLIPWQDLSPETLENLIESFVLREGTDYGEHERTLEQKVSDVKRQLQCGEAVLVWSELHETVNIMPRSQFRE</sequence>
<gene>
    <name evidence="1" type="primary">yheU</name>
    <name type="ordered locus">UTI89_C3857</name>
</gene>
<accession>Q1R5S8</accession>
<reference key="1">
    <citation type="journal article" date="2006" name="Proc. Natl. Acad. Sci. U.S.A.">
        <title>Identification of genes subject to positive selection in uropathogenic strains of Escherichia coli: a comparative genomics approach.</title>
        <authorList>
            <person name="Chen S.L."/>
            <person name="Hung C.-S."/>
            <person name="Xu J."/>
            <person name="Reigstad C.S."/>
            <person name="Magrini V."/>
            <person name="Sabo A."/>
            <person name="Blasiar D."/>
            <person name="Bieri T."/>
            <person name="Meyer R.R."/>
            <person name="Ozersky P."/>
            <person name="Armstrong J.R."/>
            <person name="Fulton R.S."/>
            <person name="Latreille J.P."/>
            <person name="Spieth J."/>
            <person name="Hooton T.M."/>
            <person name="Mardis E.R."/>
            <person name="Hultgren S.J."/>
            <person name="Gordon J.I."/>
        </authorList>
    </citation>
    <scope>NUCLEOTIDE SEQUENCE [LARGE SCALE GENOMIC DNA]</scope>
    <source>
        <strain>UTI89 / UPEC</strain>
    </source>
</reference>
<organism>
    <name type="scientific">Escherichia coli (strain UTI89 / UPEC)</name>
    <dbReference type="NCBI Taxonomy" id="364106"/>
    <lineage>
        <taxon>Bacteria</taxon>
        <taxon>Pseudomonadati</taxon>
        <taxon>Pseudomonadota</taxon>
        <taxon>Gammaproteobacteria</taxon>
        <taxon>Enterobacterales</taxon>
        <taxon>Enterobacteriaceae</taxon>
        <taxon>Escherichia</taxon>
    </lineage>
</organism>
<evidence type="ECO:0000255" key="1">
    <source>
        <dbReference type="HAMAP-Rule" id="MF_00690"/>
    </source>
</evidence>
<comment type="similarity">
    <text evidence="1">Belongs to the UPF0270 family.</text>
</comment>